<name>PSAJ_PROM4</name>
<reference key="1">
    <citation type="journal article" date="2007" name="PLoS Genet.">
        <title>Patterns and implications of gene gain and loss in the evolution of Prochlorococcus.</title>
        <authorList>
            <person name="Kettler G.C."/>
            <person name="Martiny A.C."/>
            <person name="Huang K."/>
            <person name="Zucker J."/>
            <person name="Coleman M.L."/>
            <person name="Rodrigue S."/>
            <person name="Chen F."/>
            <person name="Lapidus A."/>
            <person name="Ferriera S."/>
            <person name="Johnson J."/>
            <person name="Steglich C."/>
            <person name="Church G.M."/>
            <person name="Richardson P."/>
            <person name="Chisholm S.W."/>
        </authorList>
    </citation>
    <scope>NUCLEOTIDE SEQUENCE [LARGE SCALE GENOMIC DNA]</scope>
    <source>
        <strain>MIT 9211</strain>
    </source>
</reference>
<dbReference type="EMBL" id="CP000878">
    <property type="protein sequence ID" value="ABX08399.1"/>
    <property type="molecule type" value="Genomic_DNA"/>
</dbReference>
<dbReference type="RefSeq" id="WP_012195022.1">
    <property type="nucleotide sequence ID" value="NC_009976.1"/>
</dbReference>
<dbReference type="SMR" id="A9BE89"/>
<dbReference type="STRING" id="93059.P9211_04681"/>
<dbReference type="KEGG" id="pmj:P9211_04681"/>
<dbReference type="eggNOG" id="ENOG5033A5A">
    <property type="taxonomic scope" value="Bacteria"/>
</dbReference>
<dbReference type="HOGENOM" id="CLU_212133_1_1_3"/>
<dbReference type="OrthoDB" id="532702at2"/>
<dbReference type="Proteomes" id="UP000000788">
    <property type="component" value="Chromosome"/>
</dbReference>
<dbReference type="GO" id="GO:0009522">
    <property type="term" value="C:photosystem I"/>
    <property type="evidence" value="ECO:0007669"/>
    <property type="project" value="UniProtKB-KW"/>
</dbReference>
<dbReference type="GO" id="GO:0031676">
    <property type="term" value="C:plasma membrane-derived thylakoid membrane"/>
    <property type="evidence" value="ECO:0007669"/>
    <property type="project" value="UniProtKB-SubCell"/>
</dbReference>
<dbReference type="GO" id="GO:0015979">
    <property type="term" value="P:photosynthesis"/>
    <property type="evidence" value="ECO:0007669"/>
    <property type="project" value="UniProtKB-UniRule"/>
</dbReference>
<dbReference type="Gene3D" id="1.20.5.510">
    <property type="entry name" value="Single helix bin"/>
    <property type="match status" value="1"/>
</dbReference>
<dbReference type="HAMAP" id="MF_00522">
    <property type="entry name" value="PSI_PsaJ"/>
    <property type="match status" value="1"/>
</dbReference>
<dbReference type="InterPro" id="IPR002615">
    <property type="entry name" value="PSI_PsaJ"/>
</dbReference>
<dbReference type="InterPro" id="IPR036062">
    <property type="entry name" value="PSI_PsaJ_sf"/>
</dbReference>
<dbReference type="NCBIfam" id="NF002743">
    <property type="entry name" value="PRK02733.1"/>
    <property type="match status" value="1"/>
</dbReference>
<dbReference type="Pfam" id="PF01701">
    <property type="entry name" value="PSI_PsaJ"/>
    <property type="match status" value="1"/>
</dbReference>
<dbReference type="SUPFAM" id="SSF81544">
    <property type="entry name" value="Subunit IX of photosystem I reaction centre, PsaJ"/>
    <property type="match status" value="1"/>
</dbReference>
<organism>
    <name type="scientific">Prochlorococcus marinus (strain MIT 9211)</name>
    <dbReference type="NCBI Taxonomy" id="93059"/>
    <lineage>
        <taxon>Bacteria</taxon>
        <taxon>Bacillati</taxon>
        <taxon>Cyanobacteriota</taxon>
        <taxon>Cyanophyceae</taxon>
        <taxon>Synechococcales</taxon>
        <taxon>Prochlorococcaceae</taxon>
        <taxon>Prochlorococcus</taxon>
    </lineage>
</organism>
<keyword id="KW-0472">Membrane</keyword>
<keyword id="KW-0602">Photosynthesis</keyword>
<keyword id="KW-0603">Photosystem I</keyword>
<keyword id="KW-1185">Reference proteome</keyword>
<keyword id="KW-0793">Thylakoid</keyword>
<keyword id="KW-0812">Transmembrane</keyword>
<keyword id="KW-1133">Transmembrane helix</keyword>
<evidence type="ECO:0000255" key="1">
    <source>
        <dbReference type="HAMAP-Rule" id="MF_00522"/>
    </source>
</evidence>
<sequence length="44" mass="5118">MFKLFSTKWFRSAPVVATIWIVLTAGILVEWNRFVPDLLFHPGL</sequence>
<protein>
    <recommendedName>
        <fullName evidence="1">Photosystem I reaction center subunit IX</fullName>
    </recommendedName>
</protein>
<feature type="chain" id="PRO_1000127652" description="Photosystem I reaction center subunit IX">
    <location>
        <begin position="1"/>
        <end position="44"/>
    </location>
</feature>
<feature type="transmembrane region" description="Helical" evidence="1">
    <location>
        <begin position="9"/>
        <end position="29"/>
    </location>
</feature>
<comment type="function">
    <text evidence="1">May help in the organization of the PsaE and PsaF subunits.</text>
</comment>
<comment type="subcellular location">
    <subcellularLocation>
        <location evidence="1">Cellular thylakoid membrane</location>
        <topology evidence="1">Single-pass membrane protein</topology>
    </subcellularLocation>
</comment>
<comment type="similarity">
    <text evidence="1">Belongs to the PsaJ family.</text>
</comment>
<proteinExistence type="inferred from homology"/>
<accession>A9BE89</accession>
<gene>
    <name evidence="1" type="primary">psaJ</name>
    <name type="ordered locus">P9211_04681</name>
</gene>